<reference key="1">
    <citation type="submission" date="2007-04" db="EMBL/GenBank/DDBJ databases">
        <title>Complete sequence of Shewanella putrefaciens CN-32.</title>
        <authorList>
            <consortium name="US DOE Joint Genome Institute"/>
            <person name="Copeland A."/>
            <person name="Lucas S."/>
            <person name="Lapidus A."/>
            <person name="Barry K."/>
            <person name="Detter J.C."/>
            <person name="Glavina del Rio T."/>
            <person name="Hammon N."/>
            <person name="Israni S."/>
            <person name="Dalin E."/>
            <person name="Tice H."/>
            <person name="Pitluck S."/>
            <person name="Chain P."/>
            <person name="Malfatti S."/>
            <person name="Shin M."/>
            <person name="Vergez L."/>
            <person name="Schmutz J."/>
            <person name="Larimer F."/>
            <person name="Land M."/>
            <person name="Hauser L."/>
            <person name="Kyrpides N."/>
            <person name="Mikhailova N."/>
            <person name="Romine M.F."/>
            <person name="Fredrickson J."/>
            <person name="Tiedje J."/>
            <person name="Richardson P."/>
        </authorList>
    </citation>
    <scope>NUCLEOTIDE SEQUENCE [LARGE SCALE GENOMIC DNA]</scope>
    <source>
        <strain>CN-32 / ATCC BAA-453</strain>
    </source>
</reference>
<organism>
    <name type="scientific">Shewanella putrefaciens (strain CN-32 / ATCC BAA-453)</name>
    <dbReference type="NCBI Taxonomy" id="319224"/>
    <lineage>
        <taxon>Bacteria</taxon>
        <taxon>Pseudomonadati</taxon>
        <taxon>Pseudomonadota</taxon>
        <taxon>Gammaproteobacteria</taxon>
        <taxon>Alteromonadales</taxon>
        <taxon>Shewanellaceae</taxon>
        <taxon>Shewanella</taxon>
    </lineage>
</organism>
<protein>
    <recommendedName>
        <fullName evidence="1">ATP-dependent protease ATPase subunit HslU</fullName>
    </recommendedName>
    <alternativeName>
        <fullName evidence="1">Unfoldase HslU</fullName>
    </alternativeName>
</protein>
<proteinExistence type="inferred from homology"/>
<name>HSLU_SHEPC</name>
<gene>
    <name evidence="1" type="primary">hslU</name>
    <name type="ordered locus">Sputcn32_0528</name>
</gene>
<accession>A4Y2S7</accession>
<dbReference type="EMBL" id="CP000681">
    <property type="protein sequence ID" value="ABP74260.1"/>
    <property type="molecule type" value="Genomic_DNA"/>
</dbReference>
<dbReference type="SMR" id="A4Y2S7"/>
<dbReference type="STRING" id="319224.Sputcn32_0528"/>
<dbReference type="KEGG" id="spc:Sputcn32_0528"/>
<dbReference type="eggNOG" id="COG1220">
    <property type="taxonomic scope" value="Bacteria"/>
</dbReference>
<dbReference type="HOGENOM" id="CLU_033123_0_0_6"/>
<dbReference type="GO" id="GO:0009376">
    <property type="term" value="C:HslUV protease complex"/>
    <property type="evidence" value="ECO:0007669"/>
    <property type="project" value="UniProtKB-UniRule"/>
</dbReference>
<dbReference type="GO" id="GO:0005524">
    <property type="term" value="F:ATP binding"/>
    <property type="evidence" value="ECO:0007669"/>
    <property type="project" value="UniProtKB-UniRule"/>
</dbReference>
<dbReference type="GO" id="GO:0016887">
    <property type="term" value="F:ATP hydrolysis activity"/>
    <property type="evidence" value="ECO:0007669"/>
    <property type="project" value="InterPro"/>
</dbReference>
<dbReference type="GO" id="GO:0008233">
    <property type="term" value="F:peptidase activity"/>
    <property type="evidence" value="ECO:0007669"/>
    <property type="project" value="InterPro"/>
</dbReference>
<dbReference type="GO" id="GO:0036402">
    <property type="term" value="F:proteasome-activating activity"/>
    <property type="evidence" value="ECO:0007669"/>
    <property type="project" value="UniProtKB-UniRule"/>
</dbReference>
<dbReference type="GO" id="GO:0043335">
    <property type="term" value="P:protein unfolding"/>
    <property type="evidence" value="ECO:0007669"/>
    <property type="project" value="UniProtKB-UniRule"/>
</dbReference>
<dbReference type="GO" id="GO:0051603">
    <property type="term" value="P:proteolysis involved in protein catabolic process"/>
    <property type="evidence" value="ECO:0007669"/>
    <property type="project" value="TreeGrafter"/>
</dbReference>
<dbReference type="CDD" id="cd19498">
    <property type="entry name" value="RecA-like_HslU"/>
    <property type="match status" value="1"/>
</dbReference>
<dbReference type="FunFam" id="1.10.8.10:FF:000028">
    <property type="entry name" value="ATP-dependent protease ATPase subunit HslU"/>
    <property type="match status" value="1"/>
</dbReference>
<dbReference type="FunFam" id="1.10.8.60:FF:000027">
    <property type="entry name" value="ATP-dependent protease ATPase subunit HslU"/>
    <property type="match status" value="1"/>
</dbReference>
<dbReference type="FunFam" id="3.40.50.300:FF:000213">
    <property type="entry name" value="ATP-dependent protease ATPase subunit HslU"/>
    <property type="match status" value="1"/>
</dbReference>
<dbReference type="FunFam" id="3.40.50.300:FF:000220">
    <property type="entry name" value="ATP-dependent protease ATPase subunit HslU"/>
    <property type="match status" value="1"/>
</dbReference>
<dbReference type="Gene3D" id="1.10.8.60">
    <property type="match status" value="1"/>
</dbReference>
<dbReference type="Gene3D" id="1.10.8.10">
    <property type="entry name" value="DNA helicase RuvA subunit, C-terminal domain"/>
    <property type="match status" value="1"/>
</dbReference>
<dbReference type="Gene3D" id="3.40.50.300">
    <property type="entry name" value="P-loop containing nucleotide triphosphate hydrolases"/>
    <property type="match status" value="2"/>
</dbReference>
<dbReference type="HAMAP" id="MF_00249">
    <property type="entry name" value="HslU"/>
    <property type="match status" value="1"/>
</dbReference>
<dbReference type="InterPro" id="IPR003593">
    <property type="entry name" value="AAA+_ATPase"/>
</dbReference>
<dbReference type="InterPro" id="IPR050052">
    <property type="entry name" value="ATP-dep_Clp_protease_ClpX"/>
</dbReference>
<dbReference type="InterPro" id="IPR003959">
    <property type="entry name" value="ATPase_AAA_core"/>
</dbReference>
<dbReference type="InterPro" id="IPR019489">
    <property type="entry name" value="Clp_ATPase_C"/>
</dbReference>
<dbReference type="InterPro" id="IPR004491">
    <property type="entry name" value="HslU"/>
</dbReference>
<dbReference type="InterPro" id="IPR027417">
    <property type="entry name" value="P-loop_NTPase"/>
</dbReference>
<dbReference type="NCBIfam" id="TIGR00390">
    <property type="entry name" value="hslU"/>
    <property type="match status" value="1"/>
</dbReference>
<dbReference type="NCBIfam" id="NF003544">
    <property type="entry name" value="PRK05201.1"/>
    <property type="match status" value="1"/>
</dbReference>
<dbReference type="PANTHER" id="PTHR48102">
    <property type="entry name" value="ATP-DEPENDENT CLP PROTEASE ATP-BINDING SUBUNIT CLPX-LIKE, MITOCHONDRIAL-RELATED"/>
    <property type="match status" value="1"/>
</dbReference>
<dbReference type="PANTHER" id="PTHR48102:SF3">
    <property type="entry name" value="ATP-DEPENDENT PROTEASE ATPASE SUBUNIT HSLU"/>
    <property type="match status" value="1"/>
</dbReference>
<dbReference type="Pfam" id="PF00004">
    <property type="entry name" value="AAA"/>
    <property type="match status" value="1"/>
</dbReference>
<dbReference type="Pfam" id="PF07724">
    <property type="entry name" value="AAA_2"/>
    <property type="match status" value="1"/>
</dbReference>
<dbReference type="SMART" id="SM00382">
    <property type="entry name" value="AAA"/>
    <property type="match status" value="1"/>
</dbReference>
<dbReference type="SMART" id="SM01086">
    <property type="entry name" value="ClpB_D2-small"/>
    <property type="match status" value="1"/>
</dbReference>
<dbReference type="SUPFAM" id="SSF52540">
    <property type="entry name" value="P-loop containing nucleoside triphosphate hydrolases"/>
    <property type="match status" value="1"/>
</dbReference>
<evidence type="ECO:0000255" key="1">
    <source>
        <dbReference type="HAMAP-Rule" id="MF_00249"/>
    </source>
</evidence>
<keyword id="KW-0067">ATP-binding</keyword>
<keyword id="KW-0143">Chaperone</keyword>
<keyword id="KW-0963">Cytoplasm</keyword>
<keyword id="KW-0547">Nucleotide-binding</keyword>
<keyword id="KW-0346">Stress response</keyword>
<comment type="function">
    <text evidence="1">ATPase subunit of a proteasome-like degradation complex; this subunit has chaperone activity. The binding of ATP and its subsequent hydrolysis by HslU are essential for unfolding of protein substrates subsequently hydrolyzed by HslV. HslU recognizes the N-terminal part of its protein substrates and unfolds these before they are guided to HslV for hydrolysis.</text>
</comment>
<comment type="subunit">
    <text evidence="1">A double ring-shaped homohexamer of HslV is capped on each side by a ring-shaped HslU homohexamer. The assembly of the HslU/HslV complex is dependent on binding of ATP.</text>
</comment>
<comment type="subcellular location">
    <subcellularLocation>
        <location evidence="1">Cytoplasm</location>
    </subcellularLocation>
</comment>
<comment type="similarity">
    <text evidence="1">Belongs to the ClpX chaperone family. HslU subfamily.</text>
</comment>
<feature type="chain" id="PRO_1000012805" description="ATP-dependent protease ATPase subunit HslU">
    <location>
        <begin position="1"/>
        <end position="442"/>
    </location>
</feature>
<feature type="binding site" evidence="1">
    <location>
        <position position="18"/>
    </location>
    <ligand>
        <name>ATP</name>
        <dbReference type="ChEBI" id="CHEBI:30616"/>
    </ligand>
</feature>
<feature type="binding site" evidence="1">
    <location>
        <begin position="60"/>
        <end position="65"/>
    </location>
    <ligand>
        <name>ATP</name>
        <dbReference type="ChEBI" id="CHEBI:30616"/>
    </ligand>
</feature>
<feature type="binding site" evidence="1">
    <location>
        <position position="255"/>
    </location>
    <ligand>
        <name>ATP</name>
        <dbReference type="ChEBI" id="CHEBI:30616"/>
    </ligand>
</feature>
<feature type="binding site" evidence="1">
    <location>
        <position position="320"/>
    </location>
    <ligand>
        <name>ATP</name>
        <dbReference type="ChEBI" id="CHEBI:30616"/>
    </ligand>
</feature>
<feature type="binding site" evidence="1">
    <location>
        <position position="392"/>
    </location>
    <ligand>
        <name>ATP</name>
        <dbReference type="ChEBI" id="CHEBI:30616"/>
    </ligand>
</feature>
<sequence>MSEMTPREIVHELDAHIIGQKKAKRSVAVALRNRWRRMQLDVDFRQEVTPKNILMIGPTGVGKTEIARRLAKLANAPFIKVEATKFTEVGYVGKEVEQIIRDLTDIAIKLTREQQMGKCRQLAEEHAEERILDALLPKPKNDWESTDTDTGSNTRQIFRKKLREGQLDDKEIDIDVAQPQIGIEIMSPPGMEEMTNQLQSLFKNMGQAPAKRRKMKIKEAFKLLIEEEAAKLVNQEDLKEQAIEMVEQHGIVFLDEIDKICKRGETSGPDVSREGVQRDLLPLVEGCTVTTKHGMVKTDHILFIASGAFQMAKPSDLIPELQGRLPIRVELDALSADDFKRILTEPHASLTEQYVALMGTEGVKVEFTESGIESIAKAAWQVNERTENIGARRLHTVMEKLMEDISYEASDKSGSAFVIDADYVSAHLDNLVQDEDLSRFIL</sequence>